<comment type="function">
    <text evidence="1">Involved in the biogenesis of TorA. Acts on TorA before the insertion of the molybdenum cofactor and, as a result, probably favors a conformation of the apoenzyme that is competent for acquiring the cofactor.</text>
</comment>
<comment type="subcellular location">
    <subcellularLocation>
        <location evidence="1">Cytoplasm</location>
    </subcellularLocation>
</comment>
<comment type="similarity">
    <text evidence="1">Belongs to the TorD/DmsD family. TorD subfamily.</text>
</comment>
<evidence type="ECO:0000255" key="1">
    <source>
        <dbReference type="HAMAP-Rule" id="MF_01150"/>
    </source>
</evidence>
<feature type="chain" id="PRO_0000414898" description="Chaperone protein TorD">
    <location>
        <begin position="1"/>
        <end position="209"/>
    </location>
</feature>
<dbReference type="EMBL" id="FR877557">
    <property type="protein sequence ID" value="CCC31084.1"/>
    <property type="molecule type" value="Genomic_DNA"/>
</dbReference>
<dbReference type="RefSeq" id="WP_001164840.1">
    <property type="nucleotide sequence ID" value="NC_015761.1"/>
</dbReference>
<dbReference type="SMR" id="F8VF07"/>
<dbReference type="GeneID" id="44981022"/>
<dbReference type="KEGG" id="sbg:SBG_2023"/>
<dbReference type="eggNOG" id="COG3381">
    <property type="taxonomic scope" value="Bacteria"/>
</dbReference>
<dbReference type="Proteomes" id="UP000000289">
    <property type="component" value="Chromosome"/>
</dbReference>
<dbReference type="GO" id="GO:0005737">
    <property type="term" value="C:cytoplasm"/>
    <property type="evidence" value="ECO:0007669"/>
    <property type="project" value="UniProtKB-SubCell"/>
</dbReference>
<dbReference type="GO" id="GO:0051259">
    <property type="term" value="P:protein complex oligomerization"/>
    <property type="evidence" value="ECO:0007669"/>
    <property type="project" value="InterPro"/>
</dbReference>
<dbReference type="GO" id="GO:0006457">
    <property type="term" value="P:protein folding"/>
    <property type="evidence" value="ECO:0007669"/>
    <property type="project" value="UniProtKB-UniRule"/>
</dbReference>
<dbReference type="Gene3D" id="1.20.120.1820">
    <property type="match status" value="1"/>
</dbReference>
<dbReference type="Gene3D" id="1.20.1280.20">
    <property type="entry name" value="HscB, C-terminal domain"/>
    <property type="match status" value="1"/>
</dbReference>
<dbReference type="HAMAP" id="MF_01150">
    <property type="entry name" value="TorD"/>
    <property type="match status" value="1"/>
</dbReference>
<dbReference type="InterPro" id="IPR023069">
    <property type="entry name" value="Chaperone_TorD"/>
</dbReference>
<dbReference type="InterPro" id="IPR020945">
    <property type="entry name" value="DMSO/NO3_reduct_chaperone"/>
</dbReference>
<dbReference type="InterPro" id="IPR036386">
    <property type="entry name" value="HscB_C_sf"/>
</dbReference>
<dbReference type="InterPro" id="IPR036411">
    <property type="entry name" value="TorD-like_sf"/>
</dbReference>
<dbReference type="InterPro" id="IPR050289">
    <property type="entry name" value="TorD/DmsD_chaperones"/>
</dbReference>
<dbReference type="NCBIfam" id="NF003442">
    <property type="entry name" value="PRK04976.1"/>
    <property type="match status" value="1"/>
</dbReference>
<dbReference type="PANTHER" id="PTHR34227:SF11">
    <property type="entry name" value="CHAPERONE PROTEIN TORD"/>
    <property type="match status" value="1"/>
</dbReference>
<dbReference type="PANTHER" id="PTHR34227">
    <property type="entry name" value="CHAPERONE PROTEIN YCDY"/>
    <property type="match status" value="1"/>
</dbReference>
<dbReference type="Pfam" id="PF02613">
    <property type="entry name" value="Nitrate_red_del"/>
    <property type="match status" value="1"/>
</dbReference>
<dbReference type="SUPFAM" id="SSF89155">
    <property type="entry name" value="TorD-like"/>
    <property type="match status" value="1"/>
</dbReference>
<gene>
    <name evidence="1" type="primary">torD</name>
    <name type="ordered locus">SBG_2023</name>
</gene>
<proteinExistence type="inferred from homology"/>
<protein>
    <recommendedName>
        <fullName evidence="1">Chaperone protein TorD</fullName>
    </recommendedName>
</protein>
<sequence length="209" mass="23730">MQHSSVTSPRAAIYQWFSQLLFQELTEAQLVTLGGRESRAWIASLSTIPGLASDVKRFERSLTRVLHREAREQELAADFASLFLLAPPVGVSPYAGHYPHTTPAQERRQMNALLVEQALAPRENEASDHIAIQLALMAEQISREASVATQYYFLQHHILCWAPLFMASCQQREAEGFYVLAVAMIVHFMHEDAQYLESLLMDNVYCRNH</sequence>
<keyword id="KW-0143">Chaperone</keyword>
<keyword id="KW-0963">Cytoplasm</keyword>
<reference key="1">
    <citation type="journal article" date="2011" name="PLoS Pathog.">
        <title>Salmonella bongori provides insights into the evolution of the Salmonellae.</title>
        <authorList>
            <person name="Fookes M."/>
            <person name="Schroeder G.N."/>
            <person name="Langridge G.C."/>
            <person name="Blondel C.J."/>
            <person name="Mammina C."/>
            <person name="Connor T.R."/>
            <person name="Seth-Smith H."/>
            <person name="Vernikos G.S."/>
            <person name="Robinson K.S."/>
            <person name="Sanders M."/>
            <person name="Petty N.K."/>
            <person name="Kingsley R.A."/>
            <person name="Baumler A.J."/>
            <person name="Nuccio S.P."/>
            <person name="Contreras I."/>
            <person name="Santiviago C.A."/>
            <person name="Maskell D."/>
            <person name="Barrow P."/>
            <person name="Humphrey T."/>
            <person name="Nastasi A."/>
            <person name="Roberts M."/>
            <person name="Frankel G."/>
            <person name="Parkhill J."/>
            <person name="Dougan G."/>
            <person name="Thomson N.R."/>
        </authorList>
    </citation>
    <scope>NUCLEOTIDE SEQUENCE [LARGE SCALE GENOMIC DNA]</scope>
    <source>
        <strain>ATCC 43975 / DSM 13772 / NCTC 12419</strain>
    </source>
</reference>
<accession>F8VF07</accession>
<organism>
    <name type="scientific">Salmonella bongori (strain ATCC 43975 / DSM 13772 / NCTC 12419)</name>
    <dbReference type="NCBI Taxonomy" id="218493"/>
    <lineage>
        <taxon>Bacteria</taxon>
        <taxon>Pseudomonadati</taxon>
        <taxon>Pseudomonadota</taxon>
        <taxon>Gammaproteobacteria</taxon>
        <taxon>Enterobacterales</taxon>
        <taxon>Enterobacteriaceae</taxon>
        <taxon>Salmonella</taxon>
    </lineage>
</organism>
<name>TORD_SALBC</name>